<sequence length="40" mass="4290">MRAVQDSVRDGTRLAVRSGGHCFESLVDDPAVTTVIDVSE</sequence>
<dbReference type="EMBL" id="M73758">
    <property type="protein sequence ID" value="AAA74719.1"/>
    <property type="molecule type" value="Genomic_DNA"/>
</dbReference>
<dbReference type="PIR" id="S27709">
    <property type="entry name" value="S27709"/>
</dbReference>
<dbReference type="SMR" id="P32012"/>
<dbReference type="Gene3D" id="3.30.465.10">
    <property type="match status" value="1"/>
</dbReference>
<dbReference type="InterPro" id="IPR016169">
    <property type="entry name" value="FAD-bd_PCMH_sub2"/>
</dbReference>
<organism>
    <name type="scientific">Streptomyces peucetius</name>
    <dbReference type="NCBI Taxonomy" id="1950"/>
    <lineage>
        <taxon>Bacteria</taxon>
        <taxon>Bacillati</taxon>
        <taxon>Actinomycetota</taxon>
        <taxon>Actinomycetes</taxon>
        <taxon>Kitasatosporales</taxon>
        <taxon>Streptomycetaceae</taxon>
        <taxon>Streptomyces</taxon>
    </lineage>
</organism>
<accession>P32012</accession>
<name>YDRB_STRPE</name>
<feature type="chain" id="PRO_0000066198" description="Uncharacterized protein in drrB 3'region">
    <location>
        <begin position="1"/>
        <end position="40" status="greater than"/>
    </location>
</feature>
<feature type="non-terminal residue">
    <location>
        <position position="40"/>
    </location>
</feature>
<reference key="1">
    <citation type="journal article" date="1991" name="Proc. Natl. Acad. Sci. U.S.A.">
        <title>A bacterial analog of the mdr gene of mammalian tumor cells is present in Streptomyces peucetius, the producer of daunorubicin and doxorubicin.</title>
        <authorList>
            <person name="Guilfoile P.G."/>
            <person name="Hutchinson C.R."/>
        </authorList>
    </citation>
    <scope>NUCLEOTIDE SEQUENCE [GENOMIC DNA]</scope>
    <source>
        <strain>ATCC 29050 / DSM 40754 / JCM 9920 / NBRC 100596 / NCIMB 10972</strain>
    </source>
</reference>
<protein>
    <recommendedName>
        <fullName>Uncharacterized protein in drrB 3'region</fullName>
    </recommendedName>
</protein>
<proteinExistence type="predicted"/>